<accession>P01943</accession>
<gene>
    <name type="primary">HBA</name>
</gene>
<sequence>VLSPEDKNHVRSTWDKIGGHGAEYGAEALERMFTSFPTTKTYFPHFDVSHGSAQVKAHGKKVADALANAAGHLDDLPGALSALSDLHAHKLRVDPVNFKLLSHCLLVTLANHHPAEFTPGVHASLDKFLASVSTVLTSKYR</sequence>
<feature type="chain" id="PRO_0000052763" description="Hemoglobin subunit alpha">
    <location>
        <begin position="1"/>
        <end position="141"/>
    </location>
</feature>
<feature type="peptide" id="PRO_0000455944" description="Hemopressin" evidence="2">
    <location>
        <begin position="95"/>
        <end position="103"/>
    </location>
</feature>
<feature type="domain" description="Globin" evidence="4">
    <location>
        <begin position="1"/>
        <end position="141"/>
    </location>
</feature>
<feature type="binding site" evidence="4">
    <location>
        <position position="58"/>
    </location>
    <ligand>
        <name>O2</name>
        <dbReference type="ChEBI" id="CHEBI:15379"/>
    </ligand>
</feature>
<feature type="binding site" description="proximal binding residue" evidence="4">
    <location>
        <position position="87"/>
    </location>
    <ligand>
        <name>heme b</name>
        <dbReference type="ChEBI" id="CHEBI:60344"/>
    </ligand>
    <ligandPart>
        <name>Fe</name>
        <dbReference type="ChEBI" id="CHEBI:18248"/>
    </ligandPart>
</feature>
<feature type="modified residue" description="Phosphoserine" evidence="3">
    <location>
        <position position="3"/>
    </location>
</feature>
<feature type="modified residue" description="N6-succinyllysine" evidence="1">
    <location>
        <position position="7"/>
    </location>
</feature>
<feature type="modified residue" description="N6-acetyllysine; alternate" evidence="3">
    <location>
        <position position="16"/>
    </location>
</feature>
<feature type="modified residue" description="N6-succinyllysine; alternate" evidence="1">
    <location>
        <position position="16"/>
    </location>
</feature>
<feature type="modified residue" description="Phosphotyrosine" evidence="3">
    <location>
        <position position="24"/>
    </location>
</feature>
<feature type="modified residue" description="Phosphoserine" evidence="3">
    <location>
        <position position="35"/>
    </location>
</feature>
<feature type="modified residue" description="N6-succinyllysine" evidence="1">
    <location>
        <position position="40"/>
    </location>
</feature>
<feature type="modified residue" description="Phosphoserine" evidence="3">
    <location>
        <position position="49"/>
    </location>
</feature>
<feature type="modified residue" description="Phosphoserine" evidence="1">
    <location>
        <position position="102"/>
    </location>
</feature>
<feature type="modified residue" description="Phosphothreonine" evidence="1">
    <location>
        <position position="108"/>
    </location>
</feature>
<feature type="modified residue" description="Phosphoserine" evidence="1">
    <location>
        <position position="124"/>
    </location>
</feature>
<feature type="modified residue" description="Phosphoserine" evidence="1">
    <location>
        <position position="131"/>
    </location>
</feature>
<feature type="modified residue" description="Phosphothreonine" evidence="1">
    <location>
        <position position="134"/>
    </location>
</feature>
<feature type="modified residue" description="Phosphothreonine" evidence="1">
    <location>
        <position position="137"/>
    </location>
</feature>
<feature type="modified residue" description="Phosphoserine" evidence="1">
    <location>
        <position position="138"/>
    </location>
</feature>
<evidence type="ECO:0000250" key="1">
    <source>
        <dbReference type="UniProtKB" id="P01942"/>
    </source>
</evidence>
<evidence type="ECO:0000250" key="2">
    <source>
        <dbReference type="UniProtKB" id="P01946"/>
    </source>
</evidence>
<evidence type="ECO:0000250" key="3">
    <source>
        <dbReference type="UniProtKB" id="P69905"/>
    </source>
</evidence>
<evidence type="ECO:0000255" key="4">
    <source>
        <dbReference type="PROSITE-ProRule" id="PRU00238"/>
    </source>
</evidence>
<dbReference type="PIR" id="A02265">
    <property type="entry name" value="HAOL"/>
</dbReference>
<dbReference type="SMR" id="P01943"/>
<dbReference type="GO" id="GO:0072562">
    <property type="term" value="C:blood microparticle"/>
    <property type="evidence" value="ECO:0007669"/>
    <property type="project" value="TreeGrafter"/>
</dbReference>
<dbReference type="GO" id="GO:0031838">
    <property type="term" value="C:haptoglobin-hemoglobin complex"/>
    <property type="evidence" value="ECO:0007669"/>
    <property type="project" value="TreeGrafter"/>
</dbReference>
<dbReference type="GO" id="GO:0005833">
    <property type="term" value="C:hemoglobin complex"/>
    <property type="evidence" value="ECO:0007669"/>
    <property type="project" value="InterPro"/>
</dbReference>
<dbReference type="GO" id="GO:0031720">
    <property type="term" value="F:haptoglobin binding"/>
    <property type="evidence" value="ECO:0007669"/>
    <property type="project" value="TreeGrafter"/>
</dbReference>
<dbReference type="GO" id="GO:0020037">
    <property type="term" value="F:heme binding"/>
    <property type="evidence" value="ECO:0007669"/>
    <property type="project" value="InterPro"/>
</dbReference>
<dbReference type="GO" id="GO:0005506">
    <property type="term" value="F:iron ion binding"/>
    <property type="evidence" value="ECO:0007669"/>
    <property type="project" value="InterPro"/>
</dbReference>
<dbReference type="GO" id="GO:0043177">
    <property type="term" value="F:organic acid binding"/>
    <property type="evidence" value="ECO:0007669"/>
    <property type="project" value="TreeGrafter"/>
</dbReference>
<dbReference type="GO" id="GO:0019825">
    <property type="term" value="F:oxygen binding"/>
    <property type="evidence" value="ECO:0007669"/>
    <property type="project" value="InterPro"/>
</dbReference>
<dbReference type="GO" id="GO:0005344">
    <property type="term" value="F:oxygen carrier activity"/>
    <property type="evidence" value="ECO:0007669"/>
    <property type="project" value="UniProtKB-KW"/>
</dbReference>
<dbReference type="GO" id="GO:0004601">
    <property type="term" value="F:peroxidase activity"/>
    <property type="evidence" value="ECO:0007669"/>
    <property type="project" value="TreeGrafter"/>
</dbReference>
<dbReference type="GO" id="GO:0042744">
    <property type="term" value="P:hydrogen peroxide catabolic process"/>
    <property type="evidence" value="ECO:0007669"/>
    <property type="project" value="TreeGrafter"/>
</dbReference>
<dbReference type="CDD" id="cd08927">
    <property type="entry name" value="Hb-alpha-like"/>
    <property type="match status" value="1"/>
</dbReference>
<dbReference type="FunFam" id="1.10.490.10:FF:000002">
    <property type="entry name" value="Hemoglobin subunit alpha"/>
    <property type="match status" value="1"/>
</dbReference>
<dbReference type="Gene3D" id="1.10.490.10">
    <property type="entry name" value="Globins"/>
    <property type="match status" value="1"/>
</dbReference>
<dbReference type="InterPro" id="IPR000971">
    <property type="entry name" value="Globin"/>
</dbReference>
<dbReference type="InterPro" id="IPR009050">
    <property type="entry name" value="Globin-like_sf"/>
</dbReference>
<dbReference type="InterPro" id="IPR012292">
    <property type="entry name" value="Globin/Proto"/>
</dbReference>
<dbReference type="InterPro" id="IPR002338">
    <property type="entry name" value="Hemoglobin_a-typ"/>
</dbReference>
<dbReference type="InterPro" id="IPR050056">
    <property type="entry name" value="Hemoglobin_oxygen_transport"/>
</dbReference>
<dbReference type="InterPro" id="IPR002339">
    <property type="entry name" value="Hemoglobin_pi"/>
</dbReference>
<dbReference type="PANTHER" id="PTHR11442">
    <property type="entry name" value="HEMOGLOBIN FAMILY MEMBER"/>
    <property type="match status" value="1"/>
</dbReference>
<dbReference type="PANTHER" id="PTHR11442:SF48">
    <property type="entry name" value="HEMOGLOBIN SUBUNIT ALPHA"/>
    <property type="match status" value="1"/>
</dbReference>
<dbReference type="Pfam" id="PF00042">
    <property type="entry name" value="Globin"/>
    <property type="match status" value="1"/>
</dbReference>
<dbReference type="PRINTS" id="PR00612">
    <property type="entry name" value="ALPHAHAEM"/>
</dbReference>
<dbReference type="PRINTS" id="PR00815">
    <property type="entry name" value="PIHAEM"/>
</dbReference>
<dbReference type="SUPFAM" id="SSF46458">
    <property type="entry name" value="Globin-like"/>
    <property type="match status" value="1"/>
</dbReference>
<dbReference type="PROSITE" id="PS01033">
    <property type="entry name" value="GLOBIN"/>
    <property type="match status" value="1"/>
</dbReference>
<comment type="function">
    <text>Involved in oxygen transport from the lung to the various peripheral tissues.</text>
</comment>
<comment type="function">
    <molecule>Hemopressin</molecule>
    <text evidence="2">Hemopressin acts as an antagonist peptide of the cannabinoid receptor CNR1. Hemopressin-binding efficiently blocks cannabinoid receptor CNR1 and subsequent signaling.</text>
</comment>
<comment type="subunit">
    <text>Heterotetramer of two alpha chains and two beta chains.</text>
</comment>
<comment type="tissue specificity">
    <text>Red blood cells.</text>
</comment>
<comment type="similarity">
    <text evidence="4">Belongs to the globin family.</text>
</comment>
<organism>
    <name type="scientific">Spalax ehrenbergi</name>
    <name type="common">Middle East blind mole rat</name>
    <name type="synonym">Nannospalax ehrenbergi</name>
    <dbReference type="NCBI Taxonomy" id="30637"/>
    <lineage>
        <taxon>Eukaryota</taxon>
        <taxon>Metazoa</taxon>
        <taxon>Chordata</taxon>
        <taxon>Craniata</taxon>
        <taxon>Vertebrata</taxon>
        <taxon>Euteleostomi</taxon>
        <taxon>Mammalia</taxon>
        <taxon>Eutheria</taxon>
        <taxon>Euarchontoglires</taxon>
        <taxon>Glires</taxon>
        <taxon>Rodentia</taxon>
        <taxon>Myomorpha</taxon>
        <taxon>Muroidea</taxon>
        <taxon>Spalacidae</taxon>
        <taxon>Spalacinae</taxon>
        <taxon>Nannospalax</taxon>
    </lineage>
</organism>
<proteinExistence type="evidence at protein level"/>
<name>HBA_SPAEH</name>
<keyword id="KW-0007">Acetylation</keyword>
<keyword id="KW-0903">Direct protein sequencing</keyword>
<keyword id="KW-0349">Heme</keyword>
<keyword id="KW-0408">Iron</keyword>
<keyword id="KW-0479">Metal-binding</keyword>
<keyword id="KW-0561">Oxygen transport</keyword>
<keyword id="KW-0597">Phosphoprotein</keyword>
<keyword id="KW-0813">Transport</keyword>
<reference key="1">
    <citation type="journal article" date="1984" name="Hoppe-Seyler's Z. Physiol. Chem.">
        <title>The primary structure of the hemoglobin of the mole rat (Spalax ehrenbergi, rodentia, chromosome species 60).</title>
        <authorList>
            <person name="Kleinschmidt T."/>
            <person name="Nevo E."/>
            <person name="Braunitzer G."/>
        </authorList>
    </citation>
    <scope>PROTEIN SEQUENCE (KARYOTYPE 2N=60)</scope>
</reference>
<reference key="2">
    <citation type="journal article" date="1985" name="Biol. Chem. Hoppe-Seyler">
        <title>Mole rat hemoglobin: primary structure and evolutionary aspects in a second karyotype of Spalax ehrenbergi, Rodentia, (2n = 52).</title>
        <authorList>
            <person name="Kleinschmidt T."/>
            <person name="Nevo E."/>
            <person name="Goodman M."/>
            <person name="Braunitzer G."/>
        </authorList>
    </citation>
    <scope>PROTEIN SEQUENCE (KARYOTYPE 2N=52)</scope>
</reference>
<protein>
    <recommendedName>
        <fullName>Hemoglobin subunit alpha</fullName>
    </recommendedName>
    <alternativeName>
        <fullName>Alpha-globin</fullName>
    </alternativeName>
    <alternativeName>
        <fullName>Hemoglobin alpha chain</fullName>
    </alternativeName>
    <component>
        <recommendedName>
            <fullName evidence="2">Hemopressin</fullName>
        </recommendedName>
    </component>
</protein>